<accession>Q5XZD9</accession>
<comment type="catalytic activity">
    <reaction evidence="1">
        <text>(6S)-5,6,7,8-tetrahydrofolate + formate + ATP = (6R)-10-formyltetrahydrofolate + ADP + phosphate</text>
        <dbReference type="Rhea" id="RHEA:20221"/>
        <dbReference type="ChEBI" id="CHEBI:15740"/>
        <dbReference type="ChEBI" id="CHEBI:30616"/>
        <dbReference type="ChEBI" id="CHEBI:43474"/>
        <dbReference type="ChEBI" id="CHEBI:57453"/>
        <dbReference type="ChEBI" id="CHEBI:195366"/>
        <dbReference type="ChEBI" id="CHEBI:456216"/>
        <dbReference type="EC" id="6.3.4.3"/>
    </reaction>
</comment>
<comment type="pathway">
    <text evidence="1">One-carbon metabolism; tetrahydrofolate interconversion.</text>
</comment>
<comment type="similarity">
    <text evidence="1">Belongs to the formate--tetrahydrofolate ligase family.</text>
</comment>
<keyword id="KW-0067">ATP-binding</keyword>
<keyword id="KW-0436">Ligase</keyword>
<keyword id="KW-0547">Nucleotide-binding</keyword>
<keyword id="KW-0554">One-carbon metabolism</keyword>
<name>FTHS_PEPAC</name>
<protein>
    <recommendedName>
        <fullName evidence="1">Formate--tetrahydrofolate ligase</fullName>
        <ecNumber evidence="1">6.3.4.3</ecNumber>
    </recommendedName>
    <alternativeName>
        <fullName evidence="1">Formyltetrahydrofolate synthetase</fullName>
        <shortName evidence="1">FHS</shortName>
        <shortName evidence="1">FTHFS</shortName>
    </alternativeName>
</protein>
<sequence length="556" mass="59161">MKTDVQIAQEAKMLPIMEVAKQIGLGEDDIELYGKYKAKISLDVYKRLADKPDGKLVLVTAINPTPAGEGKTTTNVGLSMGLNKIGKKTITALNEPSLGPCFGVKGGAAGGGYAQVVPMDDINLHFTGDIHAITTAHNLLAALMDNHIKQGNALGIDINKITWKRVLDMNDRALRDIVIGLGGTANGIPRQDGFDITVASEIMAIMCLATSLSDLKDRLSRMIVGYTSRRLAVTADSLTLRGALALLLKDALKPNLVQTLENTPAIIHGGPFANIAHGCNSVTTTKTALKIADYVVTEAGFGADLGAEKFFDIKCRFADLKPDVAVIVATVRALKNHGGVAKANLGAENMKALEDGFGNLERHIENVHKFGVPAVVAINAFPTDTEKELKFVEDACRKLGADVVLSEVWAKGGEGGVELAKKVVEVTEKGAAKFKPLYPAEMPLKQKIETIAKEIYRADGVEFSAKASKELDKFEKLGFGNLPICVAKTQYSFSDNPNLKGAPKGFTVSVSNARISAGAGFIVVLTGDIMTMPGLPKVPAANHMDVLESGEIVGLF</sequence>
<dbReference type="EC" id="6.3.4.3" evidence="1"/>
<dbReference type="EMBL" id="AY722711">
    <property type="protein sequence ID" value="AAU84895.1"/>
    <property type="molecule type" value="Genomic_DNA"/>
</dbReference>
<dbReference type="SMR" id="Q5XZD9"/>
<dbReference type="UniPathway" id="UPA00193"/>
<dbReference type="GO" id="GO:0005524">
    <property type="term" value="F:ATP binding"/>
    <property type="evidence" value="ECO:0007669"/>
    <property type="project" value="UniProtKB-UniRule"/>
</dbReference>
<dbReference type="GO" id="GO:0004329">
    <property type="term" value="F:formate-tetrahydrofolate ligase activity"/>
    <property type="evidence" value="ECO:0007669"/>
    <property type="project" value="UniProtKB-UniRule"/>
</dbReference>
<dbReference type="GO" id="GO:0035999">
    <property type="term" value="P:tetrahydrofolate interconversion"/>
    <property type="evidence" value="ECO:0007669"/>
    <property type="project" value="UniProtKB-UniRule"/>
</dbReference>
<dbReference type="CDD" id="cd00477">
    <property type="entry name" value="FTHFS"/>
    <property type="match status" value="1"/>
</dbReference>
<dbReference type="FunFam" id="3.30.1510.10:FF:000001">
    <property type="entry name" value="Formate--tetrahydrofolate ligase"/>
    <property type="match status" value="1"/>
</dbReference>
<dbReference type="FunFam" id="3.10.410.10:FF:000001">
    <property type="entry name" value="Putative formate--tetrahydrofolate ligase"/>
    <property type="match status" value="1"/>
</dbReference>
<dbReference type="Gene3D" id="3.30.1510.10">
    <property type="entry name" value="Domain 2, N(10)-formyltetrahydrofolate synthetase"/>
    <property type="match status" value="1"/>
</dbReference>
<dbReference type="Gene3D" id="3.10.410.10">
    <property type="entry name" value="Formyltetrahydrofolate synthetase, domain 3"/>
    <property type="match status" value="1"/>
</dbReference>
<dbReference type="Gene3D" id="3.40.50.300">
    <property type="entry name" value="P-loop containing nucleotide triphosphate hydrolases"/>
    <property type="match status" value="1"/>
</dbReference>
<dbReference type="HAMAP" id="MF_01543">
    <property type="entry name" value="FTHFS"/>
    <property type="match status" value="1"/>
</dbReference>
<dbReference type="InterPro" id="IPR000559">
    <property type="entry name" value="Formate_THF_ligase"/>
</dbReference>
<dbReference type="InterPro" id="IPR020628">
    <property type="entry name" value="Formate_THF_ligase_CS"/>
</dbReference>
<dbReference type="InterPro" id="IPR027417">
    <property type="entry name" value="P-loop_NTPase"/>
</dbReference>
<dbReference type="NCBIfam" id="NF010030">
    <property type="entry name" value="PRK13505.1"/>
    <property type="match status" value="1"/>
</dbReference>
<dbReference type="Pfam" id="PF01268">
    <property type="entry name" value="FTHFS"/>
    <property type="match status" value="1"/>
</dbReference>
<dbReference type="SUPFAM" id="SSF52540">
    <property type="entry name" value="P-loop containing nucleoside triphosphate hydrolases"/>
    <property type="match status" value="1"/>
</dbReference>
<dbReference type="PROSITE" id="PS00721">
    <property type="entry name" value="FTHFS_1"/>
    <property type="match status" value="1"/>
</dbReference>
<dbReference type="PROSITE" id="PS00722">
    <property type="entry name" value="FTHFS_2"/>
    <property type="match status" value="1"/>
</dbReference>
<proteinExistence type="inferred from homology"/>
<reference key="1">
    <citation type="submission" date="2004-08" db="EMBL/GenBank/DDBJ databases">
        <title>Genes involved in glycine decarboxylation reaction of Eubacterium acidaminophilum.</title>
        <authorList>
            <person name="Poehlein A."/>
            <person name="Lechel A."/>
            <person name="Groebe D."/>
            <person name="Andreesen J.R."/>
        </authorList>
    </citation>
    <scope>NUCLEOTIDE SEQUENCE [GENOMIC DNA]</scope>
</reference>
<gene>
    <name evidence="1" type="primary">fhs</name>
    <name type="synonym">thf</name>
</gene>
<feature type="chain" id="PRO_0000199348" description="Formate--tetrahydrofolate ligase">
    <location>
        <begin position="1"/>
        <end position="556"/>
    </location>
</feature>
<feature type="binding site" evidence="1">
    <location>
        <begin position="65"/>
        <end position="72"/>
    </location>
    <ligand>
        <name>ATP</name>
        <dbReference type="ChEBI" id="CHEBI:30616"/>
    </ligand>
</feature>
<evidence type="ECO:0000255" key="1">
    <source>
        <dbReference type="HAMAP-Rule" id="MF_01543"/>
    </source>
</evidence>
<organism>
    <name type="scientific">Peptoclostridium acidaminophilum</name>
    <name type="common">Eubacterium acidaminophilum</name>
    <dbReference type="NCBI Taxonomy" id="1731"/>
    <lineage>
        <taxon>Bacteria</taxon>
        <taxon>Bacillati</taxon>
        <taxon>Bacillota</taxon>
        <taxon>Clostridia</taxon>
        <taxon>Peptostreptococcales</taxon>
        <taxon>Peptoclostridiaceae</taxon>
        <taxon>Peptoclostridium</taxon>
    </lineage>
</organism>